<evidence type="ECO:0000305" key="1"/>
<accession>P9WFL6</accession>
<accession>L0TBV7</accession>
<accession>P67309</accession>
<accession>Q50671</accession>
<gene>
    <name type="ordered locus">MT2352</name>
</gene>
<proteinExistence type="inferred from homology"/>
<protein>
    <recommendedName>
        <fullName>UPF0167 protein MT2352</fullName>
    </recommendedName>
</protein>
<keyword id="KW-1185">Reference proteome</keyword>
<comment type="similarity">
    <text evidence="1">Belongs to the UPF0167 family.</text>
</comment>
<dbReference type="EMBL" id="AE000516">
    <property type="protein sequence ID" value="AAK46637.1"/>
    <property type="molecule type" value="Genomic_DNA"/>
</dbReference>
<dbReference type="PIR" id="C70733">
    <property type="entry name" value="C70733"/>
</dbReference>
<dbReference type="KEGG" id="mtc:MT2352"/>
<dbReference type="HOGENOM" id="CLU_108448_0_0_11"/>
<dbReference type="Proteomes" id="UP000001020">
    <property type="component" value="Chromosome"/>
</dbReference>
<dbReference type="InterPro" id="IPR005363">
    <property type="entry name" value="UPF0167"/>
</dbReference>
<dbReference type="Pfam" id="PF03691">
    <property type="entry name" value="UPF0167"/>
    <property type="match status" value="1"/>
</dbReference>
<reference key="1">
    <citation type="journal article" date="2002" name="J. Bacteriol.">
        <title>Whole-genome comparison of Mycobacterium tuberculosis clinical and laboratory strains.</title>
        <authorList>
            <person name="Fleischmann R.D."/>
            <person name="Alland D."/>
            <person name="Eisen J.A."/>
            <person name="Carpenter L."/>
            <person name="White O."/>
            <person name="Peterson J.D."/>
            <person name="DeBoy R.T."/>
            <person name="Dodson R.J."/>
            <person name="Gwinn M.L."/>
            <person name="Haft D.H."/>
            <person name="Hickey E.K."/>
            <person name="Kolonay J.F."/>
            <person name="Nelson W.C."/>
            <person name="Umayam L.A."/>
            <person name="Ermolaeva M.D."/>
            <person name="Salzberg S.L."/>
            <person name="Delcher A."/>
            <person name="Utterback T.R."/>
            <person name="Weidman J.F."/>
            <person name="Khouri H.M."/>
            <person name="Gill J."/>
            <person name="Mikula A."/>
            <person name="Bishai W."/>
            <person name="Jacobs W.R. Jr."/>
            <person name="Venter J.C."/>
            <person name="Fraser C.M."/>
        </authorList>
    </citation>
    <scope>NUCLEOTIDE SEQUENCE [LARGE SCALE GENOMIC DNA]</scope>
    <source>
        <strain>CDC 1551 / Oshkosh</strain>
    </source>
</reference>
<organism>
    <name type="scientific">Mycobacterium tuberculosis (strain CDC 1551 / Oshkosh)</name>
    <dbReference type="NCBI Taxonomy" id="83331"/>
    <lineage>
        <taxon>Bacteria</taxon>
        <taxon>Bacillati</taxon>
        <taxon>Actinomycetota</taxon>
        <taxon>Actinomycetes</taxon>
        <taxon>Mycobacteriales</taxon>
        <taxon>Mycobacteriaceae</taxon>
        <taxon>Mycobacterium</taxon>
        <taxon>Mycobacterium tuberculosis complex</taxon>
    </lineage>
</organism>
<sequence>MPVEETSTPQKLPQFRYHPDPVGTGSIVADEVSCVSCEQRRPYTYTGPVYAEEELNEAICPWCIADGSAASRFDATFTDAMWAVPDDVPEDVTEEVLCRTPGFTGWLQEEWLHHCGDAAAFLGPVGASEVADLPDALDALRNEYRGYDWPADKIEEFILTLDRNGLATAYLFRCLSCGVHLAYADFA</sequence>
<feature type="chain" id="PRO_0000428517" description="UPF0167 protein MT2352">
    <location>
        <begin position="1"/>
        <end position="187"/>
    </location>
</feature>
<name>Y2295_MYCTO</name>